<sequence length="327" mass="35858">MSSQFEQLKLLSVLVCDTGDPELVKTSGSQDATTNPSLILKVAQEPKYQELLTEAIAWGIRQNGDDIQTLTFVLDKIQVNFGLEILKCIPGRVSLEIDARLSFNTEAMIQRAIFLSELFAATGGDKKRLLVKIPGTWEGIRAVEVLEKQGIACNVTLIFNLIQAIAAAKANATLISPFVGRIYDWWIAAYGDEGYSIDADPGVASVSNIYTYYKKFDIPTQIMAASFRSKEQVLALAGCDLLTVSPKLLDELKKDQSPVAKKLDVAAAKKLDVQPVELTESVFRFLMNEDAMATEKLAEGIRIFSGDTQILEAAVTEFIKQIAAQDA</sequence>
<dbReference type="EC" id="2.2.1.2" evidence="2"/>
<dbReference type="EMBL" id="AE015925">
    <property type="protein sequence ID" value="AAP05431.1"/>
    <property type="molecule type" value="Genomic_DNA"/>
</dbReference>
<dbReference type="RefSeq" id="WP_011006646.1">
    <property type="nucleotide sequence ID" value="NC_003361.3"/>
</dbReference>
<dbReference type="SMR" id="Q822J3"/>
<dbReference type="STRING" id="227941.CCA_00689"/>
<dbReference type="KEGG" id="cca:CCA_00689"/>
<dbReference type="eggNOG" id="COG0176">
    <property type="taxonomic scope" value="Bacteria"/>
</dbReference>
<dbReference type="HOGENOM" id="CLU_047470_0_1_0"/>
<dbReference type="OrthoDB" id="9807051at2"/>
<dbReference type="UniPathway" id="UPA00115">
    <property type="reaction ID" value="UER00414"/>
</dbReference>
<dbReference type="Proteomes" id="UP000002193">
    <property type="component" value="Chromosome"/>
</dbReference>
<dbReference type="GO" id="GO:0005737">
    <property type="term" value="C:cytoplasm"/>
    <property type="evidence" value="ECO:0007669"/>
    <property type="project" value="UniProtKB-SubCell"/>
</dbReference>
<dbReference type="GO" id="GO:0004801">
    <property type="term" value="F:transaldolase activity"/>
    <property type="evidence" value="ECO:0000250"/>
    <property type="project" value="UniProtKB"/>
</dbReference>
<dbReference type="GO" id="GO:0005975">
    <property type="term" value="P:carbohydrate metabolic process"/>
    <property type="evidence" value="ECO:0007669"/>
    <property type="project" value="InterPro"/>
</dbReference>
<dbReference type="GO" id="GO:0006098">
    <property type="term" value="P:pentose-phosphate shunt"/>
    <property type="evidence" value="ECO:0007669"/>
    <property type="project" value="UniProtKB-UniRule"/>
</dbReference>
<dbReference type="CDD" id="cd00957">
    <property type="entry name" value="Transaldolase_TalAB"/>
    <property type="match status" value="1"/>
</dbReference>
<dbReference type="FunFam" id="3.20.20.70:FF:000163">
    <property type="entry name" value="Transaldolase B"/>
    <property type="match status" value="1"/>
</dbReference>
<dbReference type="Gene3D" id="3.20.20.70">
    <property type="entry name" value="Aldolase class I"/>
    <property type="match status" value="1"/>
</dbReference>
<dbReference type="HAMAP" id="MF_00492">
    <property type="entry name" value="Transaldolase_1"/>
    <property type="match status" value="1"/>
</dbReference>
<dbReference type="InterPro" id="IPR013785">
    <property type="entry name" value="Aldolase_TIM"/>
</dbReference>
<dbReference type="InterPro" id="IPR001585">
    <property type="entry name" value="TAL/FSA"/>
</dbReference>
<dbReference type="InterPro" id="IPR004730">
    <property type="entry name" value="Transaldolase_1"/>
</dbReference>
<dbReference type="InterPro" id="IPR018225">
    <property type="entry name" value="Transaldolase_AS"/>
</dbReference>
<dbReference type="NCBIfam" id="TIGR00874">
    <property type="entry name" value="talAB"/>
    <property type="match status" value="1"/>
</dbReference>
<dbReference type="PANTHER" id="PTHR10683">
    <property type="entry name" value="TRANSALDOLASE"/>
    <property type="match status" value="1"/>
</dbReference>
<dbReference type="PANTHER" id="PTHR10683:SF18">
    <property type="entry name" value="TRANSALDOLASE"/>
    <property type="match status" value="1"/>
</dbReference>
<dbReference type="Pfam" id="PF00923">
    <property type="entry name" value="TAL_FSA"/>
    <property type="match status" value="1"/>
</dbReference>
<dbReference type="SUPFAM" id="SSF51569">
    <property type="entry name" value="Aldolase"/>
    <property type="match status" value="1"/>
</dbReference>
<dbReference type="PROSITE" id="PS01054">
    <property type="entry name" value="TRANSALDOLASE_1"/>
    <property type="match status" value="1"/>
</dbReference>
<dbReference type="PROSITE" id="PS00958">
    <property type="entry name" value="TRANSALDOLASE_2"/>
    <property type="match status" value="1"/>
</dbReference>
<evidence type="ECO:0000250" key="1"/>
<evidence type="ECO:0000255" key="2">
    <source>
        <dbReference type="HAMAP-Rule" id="MF_00492"/>
    </source>
</evidence>
<accession>Q822J3</accession>
<comment type="function">
    <text evidence="2">Transaldolase is important for the balance of metabolites in the pentose-phosphate pathway.</text>
</comment>
<comment type="catalytic activity">
    <reaction evidence="2">
        <text>D-sedoheptulose 7-phosphate + D-glyceraldehyde 3-phosphate = D-erythrose 4-phosphate + beta-D-fructose 6-phosphate</text>
        <dbReference type="Rhea" id="RHEA:17053"/>
        <dbReference type="ChEBI" id="CHEBI:16897"/>
        <dbReference type="ChEBI" id="CHEBI:57483"/>
        <dbReference type="ChEBI" id="CHEBI:57634"/>
        <dbReference type="ChEBI" id="CHEBI:59776"/>
        <dbReference type="EC" id="2.2.1.2"/>
    </reaction>
</comment>
<comment type="pathway">
    <text evidence="2">Carbohydrate degradation; pentose phosphate pathway; D-glyceraldehyde 3-phosphate and beta-D-fructose 6-phosphate from D-ribose 5-phosphate and D-xylulose 5-phosphate (non-oxidative stage): step 2/3.</text>
</comment>
<comment type="subunit">
    <text evidence="1">Homodimer.</text>
</comment>
<comment type="subcellular location">
    <subcellularLocation>
        <location evidence="2">Cytoplasm</location>
    </subcellularLocation>
</comment>
<comment type="similarity">
    <text evidence="2">Belongs to the transaldolase family. Type 1 subfamily.</text>
</comment>
<reference key="1">
    <citation type="journal article" date="2003" name="Nucleic Acids Res.">
        <title>Genome sequence of Chlamydophila caviae (Chlamydia psittaci GPIC): examining the role of niche-specific genes in the evolution of the Chlamydiaceae.</title>
        <authorList>
            <person name="Read T.D."/>
            <person name="Myers G.S.A."/>
            <person name="Brunham R.C."/>
            <person name="Nelson W.C."/>
            <person name="Paulsen I.T."/>
            <person name="Heidelberg J.F."/>
            <person name="Holtzapple E.K."/>
            <person name="Khouri H.M."/>
            <person name="Federova N.B."/>
            <person name="Carty H.A."/>
            <person name="Umayam L.A."/>
            <person name="Haft D.H."/>
            <person name="Peterson J.D."/>
            <person name="Beanan M.J."/>
            <person name="White O."/>
            <person name="Salzberg S.L."/>
            <person name="Hsia R.-C."/>
            <person name="McClarty G."/>
            <person name="Rank R.G."/>
            <person name="Bavoil P.M."/>
            <person name="Fraser C.M."/>
        </authorList>
    </citation>
    <scope>NUCLEOTIDE SEQUENCE [LARGE SCALE GENOMIC DNA]</scope>
    <source>
        <strain>ATCC VR-813 / DSM 19441 / 03DC25 / GPIC</strain>
    </source>
</reference>
<gene>
    <name evidence="2" type="primary">tal</name>
    <name type="ordered locus">CCA_00689</name>
</gene>
<keyword id="KW-0963">Cytoplasm</keyword>
<keyword id="KW-0570">Pentose shunt</keyword>
<keyword id="KW-0704">Schiff base</keyword>
<keyword id="KW-0808">Transferase</keyword>
<name>TAL_CHLCV</name>
<protein>
    <recommendedName>
        <fullName evidence="2">Transaldolase</fullName>
        <ecNumber evidence="2">2.2.1.2</ecNumber>
    </recommendedName>
</protein>
<organism>
    <name type="scientific">Chlamydia caviae (strain ATCC VR-813 / DSM 19441 / 03DC25 / GPIC)</name>
    <name type="common">Chlamydophila caviae</name>
    <dbReference type="NCBI Taxonomy" id="227941"/>
    <lineage>
        <taxon>Bacteria</taxon>
        <taxon>Pseudomonadati</taxon>
        <taxon>Chlamydiota</taxon>
        <taxon>Chlamydiia</taxon>
        <taxon>Chlamydiales</taxon>
        <taxon>Chlamydiaceae</taxon>
        <taxon>Chlamydia/Chlamydophila group</taxon>
        <taxon>Chlamydia</taxon>
    </lineage>
</organism>
<proteinExistence type="inferred from homology"/>
<feature type="chain" id="PRO_0000173586" description="Transaldolase">
    <location>
        <begin position="1"/>
        <end position="327"/>
    </location>
</feature>
<feature type="active site" description="Schiff-base intermediate with substrate" evidence="2">
    <location>
        <position position="132"/>
    </location>
</feature>